<sequence>MPFEKTMDKIVALAKNRGFVYPGSDIYGGLANTWDYGPIGVELKNNVKKAWWQKFVHESQYNVGIDCAILMNNEVWVASGHVGNFSDPLMDCKECKSRFRADKLVEEHMTSKGVEKASADGWNNEKLKEYIDDNNIVCPDCGKTNFTDIRQFNLMFKTFQGVTEDSKAEIYLRPETAQGIFVNFKNVQRTSRKKIPFGIAQIGKAFRNEITPGNFTFRTREFEQMELEFFCEPGTDLEWHNYWKEYCWKFLLKLGIKEENIRFRVHEKEELSHYSNATSDIEYLFPFGWGELWGIADRTDYDLTQHQNRSGKDMTYLNPVTNERYIPYCIEPSVGADRAVLAFLVDAYDEEELEGGDVRTVMHFHPAIAPFKVAILPLSKKLSEKALDVYNMLRKDFNVDYDDAGSIGKRYRREDEIGTPYCITIDFDTMDNDTVTIRDRDTMKQFRVKIDELKDFIKEKIQF</sequence>
<keyword id="KW-0030">Aminoacyl-tRNA synthetase</keyword>
<keyword id="KW-0067">ATP-binding</keyword>
<keyword id="KW-0963">Cytoplasm</keyword>
<keyword id="KW-0436">Ligase</keyword>
<keyword id="KW-0547">Nucleotide-binding</keyword>
<keyword id="KW-0648">Protein biosynthesis</keyword>
<keyword id="KW-1185">Reference proteome</keyword>
<accession>A5N4L2</accession>
<proteinExistence type="inferred from homology"/>
<protein>
    <recommendedName>
        <fullName evidence="1">Glycine--tRNA ligase</fullName>
        <ecNumber evidence="1">6.1.1.14</ecNumber>
    </recommendedName>
    <alternativeName>
        <fullName evidence="1">Glycyl-tRNA synthetase</fullName>
        <shortName evidence="1">GlyRS</shortName>
    </alternativeName>
</protein>
<reference key="1">
    <citation type="journal article" date="2008" name="Proc. Natl. Acad. Sci. U.S.A.">
        <title>The genome of Clostridium kluyveri, a strict anaerobe with unique metabolic features.</title>
        <authorList>
            <person name="Seedorf H."/>
            <person name="Fricke W.F."/>
            <person name="Veith B."/>
            <person name="Brueggemann H."/>
            <person name="Liesegang H."/>
            <person name="Strittmatter A."/>
            <person name="Miethke M."/>
            <person name="Buckel W."/>
            <person name="Hinderberger J."/>
            <person name="Li F."/>
            <person name="Hagemeier C."/>
            <person name="Thauer R.K."/>
            <person name="Gottschalk G."/>
        </authorList>
    </citation>
    <scope>NUCLEOTIDE SEQUENCE [LARGE SCALE GENOMIC DNA]</scope>
    <source>
        <strain>ATCC 8527 / DSM 555 / NBRC 12016 / NCIMB 10680 / K1</strain>
    </source>
</reference>
<name>SYG_CLOK5</name>
<comment type="function">
    <text evidence="1">Catalyzes the attachment of glycine to tRNA(Gly).</text>
</comment>
<comment type="catalytic activity">
    <reaction evidence="1">
        <text>tRNA(Gly) + glycine + ATP = glycyl-tRNA(Gly) + AMP + diphosphate</text>
        <dbReference type="Rhea" id="RHEA:16013"/>
        <dbReference type="Rhea" id="RHEA-COMP:9664"/>
        <dbReference type="Rhea" id="RHEA-COMP:9683"/>
        <dbReference type="ChEBI" id="CHEBI:30616"/>
        <dbReference type="ChEBI" id="CHEBI:33019"/>
        <dbReference type="ChEBI" id="CHEBI:57305"/>
        <dbReference type="ChEBI" id="CHEBI:78442"/>
        <dbReference type="ChEBI" id="CHEBI:78522"/>
        <dbReference type="ChEBI" id="CHEBI:456215"/>
        <dbReference type="EC" id="6.1.1.14"/>
    </reaction>
</comment>
<comment type="subunit">
    <text evidence="1">Homodimer.</text>
</comment>
<comment type="subcellular location">
    <subcellularLocation>
        <location evidence="1">Cytoplasm</location>
    </subcellularLocation>
</comment>
<comment type="similarity">
    <text evidence="1">Belongs to the class-II aminoacyl-tRNA synthetase family.</text>
</comment>
<gene>
    <name evidence="1" type="primary">glyQS</name>
    <name type="ordered locus">CKL_0180</name>
</gene>
<feature type="chain" id="PRO_1000125530" description="Glycine--tRNA ligase">
    <location>
        <begin position="1"/>
        <end position="463"/>
    </location>
</feature>
<feature type="binding site" evidence="1">
    <location>
        <position position="100"/>
    </location>
    <ligand>
        <name>substrate</name>
    </ligand>
</feature>
<feature type="binding site" evidence="1">
    <location>
        <position position="175"/>
    </location>
    <ligand>
        <name>substrate</name>
    </ligand>
</feature>
<feature type="binding site" evidence="1">
    <location>
        <begin position="207"/>
        <end position="209"/>
    </location>
    <ligand>
        <name>ATP</name>
        <dbReference type="ChEBI" id="CHEBI:30616"/>
    </ligand>
</feature>
<feature type="binding site" evidence="1">
    <location>
        <begin position="217"/>
        <end position="222"/>
    </location>
    <ligand>
        <name>ATP</name>
        <dbReference type="ChEBI" id="CHEBI:30616"/>
    </ligand>
</feature>
<feature type="binding site" evidence="1">
    <location>
        <begin position="222"/>
        <end position="226"/>
    </location>
    <ligand>
        <name>substrate</name>
    </ligand>
</feature>
<feature type="binding site" evidence="1">
    <location>
        <begin position="291"/>
        <end position="292"/>
    </location>
    <ligand>
        <name>ATP</name>
        <dbReference type="ChEBI" id="CHEBI:30616"/>
    </ligand>
</feature>
<feature type="binding site" evidence="1">
    <location>
        <begin position="331"/>
        <end position="335"/>
    </location>
    <ligand>
        <name>substrate</name>
    </ligand>
</feature>
<feature type="binding site" evidence="1">
    <location>
        <begin position="335"/>
        <end position="338"/>
    </location>
    <ligand>
        <name>ATP</name>
        <dbReference type="ChEBI" id="CHEBI:30616"/>
    </ligand>
</feature>
<evidence type="ECO:0000255" key="1">
    <source>
        <dbReference type="HAMAP-Rule" id="MF_00253"/>
    </source>
</evidence>
<dbReference type="EC" id="6.1.1.14" evidence="1"/>
<dbReference type="EMBL" id="CP000673">
    <property type="protein sequence ID" value="EDK32243.1"/>
    <property type="molecule type" value="Genomic_DNA"/>
</dbReference>
<dbReference type="RefSeq" id="WP_011988769.1">
    <property type="nucleotide sequence ID" value="NC_009706.1"/>
</dbReference>
<dbReference type="SMR" id="A5N4L2"/>
<dbReference type="STRING" id="431943.CKL_0180"/>
<dbReference type="KEGG" id="ckl:CKL_0180"/>
<dbReference type="eggNOG" id="COG0423">
    <property type="taxonomic scope" value="Bacteria"/>
</dbReference>
<dbReference type="HOGENOM" id="CLU_015515_2_1_9"/>
<dbReference type="Proteomes" id="UP000002411">
    <property type="component" value="Chromosome"/>
</dbReference>
<dbReference type="GO" id="GO:0005737">
    <property type="term" value="C:cytoplasm"/>
    <property type="evidence" value="ECO:0007669"/>
    <property type="project" value="UniProtKB-SubCell"/>
</dbReference>
<dbReference type="GO" id="GO:0005524">
    <property type="term" value="F:ATP binding"/>
    <property type="evidence" value="ECO:0007669"/>
    <property type="project" value="UniProtKB-UniRule"/>
</dbReference>
<dbReference type="GO" id="GO:0140096">
    <property type="term" value="F:catalytic activity, acting on a protein"/>
    <property type="evidence" value="ECO:0007669"/>
    <property type="project" value="UniProtKB-ARBA"/>
</dbReference>
<dbReference type="GO" id="GO:0004820">
    <property type="term" value="F:glycine-tRNA ligase activity"/>
    <property type="evidence" value="ECO:0000250"/>
    <property type="project" value="UniProtKB"/>
</dbReference>
<dbReference type="GO" id="GO:0046983">
    <property type="term" value="F:protein dimerization activity"/>
    <property type="evidence" value="ECO:0000250"/>
    <property type="project" value="UniProtKB"/>
</dbReference>
<dbReference type="GO" id="GO:0016740">
    <property type="term" value="F:transferase activity"/>
    <property type="evidence" value="ECO:0007669"/>
    <property type="project" value="UniProtKB-ARBA"/>
</dbReference>
<dbReference type="GO" id="GO:0006426">
    <property type="term" value="P:glycyl-tRNA aminoacylation"/>
    <property type="evidence" value="ECO:0007669"/>
    <property type="project" value="UniProtKB-UniRule"/>
</dbReference>
<dbReference type="CDD" id="cd00774">
    <property type="entry name" value="GlyRS-like_core"/>
    <property type="match status" value="1"/>
</dbReference>
<dbReference type="CDD" id="cd00858">
    <property type="entry name" value="GlyRS_anticodon"/>
    <property type="match status" value="1"/>
</dbReference>
<dbReference type="FunFam" id="3.40.50.800:FF:000002">
    <property type="entry name" value="Glycine--tRNA ligase"/>
    <property type="match status" value="1"/>
</dbReference>
<dbReference type="Gene3D" id="3.40.50.800">
    <property type="entry name" value="Anticodon-binding domain"/>
    <property type="match status" value="1"/>
</dbReference>
<dbReference type="Gene3D" id="3.30.930.10">
    <property type="entry name" value="Bira Bifunctional Protein, Domain 2"/>
    <property type="match status" value="1"/>
</dbReference>
<dbReference type="HAMAP" id="MF_00253_B">
    <property type="entry name" value="Gly_tRNA_synth_B"/>
    <property type="match status" value="1"/>
</dbReference>
<dbReference type="InterPro" id="IPR002314">
    <property type="entry name" value="aa-tRNA-synt_IIb"/>
</dbReference>
<dbReference type="InterPro" id="IPR006195">
    <property type="entry name" value="aa-tRNA-synth_II"/>
</dbReference>
<dbReference type="InterPro" id="IPR045864">
    <property type="entry name" value="aa-tRNA-synth_II/BPL/LPL"/>
</dbReference>
<dbReference type="InterPro" id="IPR004154">
    <property type="entry name" value="Anticodon-bd"/>
</dbReference>
<dbReference type="InterPro" id="IPR036621">
    <property type="entry name" value="Anticodon-bd_dom_sf"/>
</dbReference>
<dbReference type="InterPro" id="IPR027031">
    <property type="entry name" value="Gly-tRNA_synthase/POLG2"/>
</dbReference>
<dbReference type="InterPro" id="IPR022961">
    <property type="entry name" value="Gly_tRNA_ligase_bac"/>
</dbReference>
<dbReference type="InterPro" id="IPR033731">
    <property type="entry name" value="GlyRS-like_core"/>
</dbReference>
<dbReference type="InterPro" id="IPR002315">
    <property type="entry name" value="tRNA-synt_gly"/>
</dbReference>
<dbReference type="NCBIfam" id="TIGR00389">
    <property type="entry name" value="glyS_dimeric"/>
    <property type="match status" value="1"/>
</dbReference>
<dbReference type="NCBIfam" id="NF003211">
    <property type="entry name" value="PRK04173.1"/>
    <property type="match status" value="1"/>
</dbReference>
<dbReference type="PANTHER" id="PTHR10745:SF8">
    <property type="entry name" value="DNA POLYMERASE SUBUNIT GAMMA-2, MITOCHONDRIAL"/>
    <property type="match status" value="1"/>
</dbReference>
<dbReference type="PANTHER" id="PTHR10745">
    <property type="entry name" value="GLYCYL-TRNA SYNTHETASE/DNA POLYMERASE SUBUNIT GAMMA-2"/>
    <property type="match status" value="1"/>
</dbReference>
<dbReference type="Pfam" id="PF03129">
    <property type="entry name" value="HGTP_anticodon"/>
    <property type="match status" value="1"/>
</dbReference>
<dbReference type="Pfam" id="PF00587">
    <property type="entry name" value="tRNA-synt_2b"/>
    <property type="match status" value="1"/>
</dbReference>
<dbReference type="PRINTS" id="PR01043">
    <property type="entry name" value="TRNASYNTHGLY"/>
</dbReference>
<dbReference type="SUPFAM" id="SSF52954">
    <property type="entry name" value="Class II aaRS ABD-related"/>
    <property type="match status" value="1"/>
</dbReference>
<dbReference type="SUPFAM" id="SSF55681">
    <property type="entry name" value="Class II aaRS and biotin synthetases"/>
    <property type="match status" value="1"/>
</dbReference>
<dbReference type="PROSITE" id="PS50862">
    <property type="entry name" value="AA_TRNA_LIGASE_II"/>
    <property type="match status" value="1"/>
</dbReference>
<organism>
    <name type="scientific">Clostridium kluyveri (strain ATCC 8527 / DSM 555 / NBRC 12016 / NCIMB 10680 / K1)</name>
    <dbReference type="NCBI Taxonomy" id="431943"/>
    <lineage>
        <taxon>Bacteria</taxon>
        <taxon>Bacillati</taxon>
        <taxon>Bacillota</taxon>
        <taxon>Clostridia</taxon>
        <taxon>Eubacteriales</taxon>
        <taxon>Clostridiaceae</taxon>
        <taxon>Clostridium</taxon>
    </lineage>
</organism>